<organism>
    <name type="scientific">Borreliella afzelii (strain PKo)</name>
    <name type="common">Borrelia afzelii</name>
    <dbReference type="NCBI Taxonomy" id="390236"/>
    <lineage>
        <taxon>Bacteria</taxon>
        <taxon>Pseudomonadati</taxon>
        <taxon>Spirochaetota</taxon>
        <taxon>Spirochaetia</taxon>
        <taxon>Spirochaetales</taxon>
        <taxon>Borreliaceae</taxon>
        <taxon>Borreliella</taxon>
    </lineage>
</organism>
<accession>Q0SN31</accession>
<accession>G0ISC0</accession>
<name>EFTU_BORAP</name>
<keyword id="KW-0963">Cytoplasm</keyword>
<keyword id="KW-0251">Elongation factor</keyword>
<keyword id="KW-0342">GTP-binding</keyword>
<keyword id="KW-0378">Hydrolase</keyword>
<keyword id="KW-0460">Magnesium</keyword>
<keyword id="KW-0479">Metal-binding</keyword>
<keyword id="KW-0547">Nucleotide-binding</keyword>
<keyword id="KW-0648">Protein biosynthesis</keyword>
<gene>
    <name evidence="2" type="primary">tuf</name>
    <name type="ordered locus">BAPKO_0504</name>
    <name type="ordered locus">BafPKo_0493</name>
</gene>
<evidence type="ECO:0000250" key="1"/>
<evidence type="ECO:0000255" key="2">
    <source>
        <dbReference type="HAMAP-Rule" id="MF_00118"/>
    </source>
</evidence>
<sequence length="394" mass="43354">MAKEVFQRTKPHMNVGTIGHVDHGKTTLTAAISIYCSKLNKDAKALKYEDIDNAPEEKARGITINARHIEYETANRHYAHVDCPGHADYIKNMITGAAQMDAAILLVAADSGAEPQTKEHLLLAQRMGIKKIIVFLNKLDLADPELVELVEVEVLELVEKYGFSANTPIIKGSAFGAMSNPEDPEATKCVKELLESMDNYFDLPERDIDKPFLLAVEDVFSISGRGTVATGRIERGVIKVGQEVEIVGIKETRKTTVTGVEMFQKILEQGQAGDNVGLLLRGVDKKDIERGQVLSAPGTITPHKKFKASIYCLTKEEGGRHKPFFPGYRPQFFFRTTDVTGVVALEGKEMVMPGDNVDIVVELISSIAMDKNVEFAVREGGRTVASGRILEILE</sequence>
<dbReference type="EC" id="3.6.5.3" evidence="2"/>
<dbReference type="EMBL" id="CP000395">
    <property type="protein sequence ID" value="ABH01747.1"/>
    <property type="molecule type" value="Genomic_DNA"/>
</dbReference>
<dbReference type="EMBL" id="CP002933">
    <property type="protein sequence ID" value="AEL69701.1"/>
    <property type="molecule type" value="Genomic_DNA"/>
</dbReference>
<dbReference type="RefSeq" id="WP_004789670.1">
    <property type="nucleotide sequence ID" value="NZ_CP160066.1"/>
</dbReference>
<dbReference type="SMR" id="Q0SN31"/>
<dbReference type="STRING" id="29518.BLA32_01880"/>
<dbReference type="GeneID" id="77265323"/>
<dbReference type="KEGG" id="baf:BAPKO_0504"/>
<dbReference type="KEGG" id="bafz:BafPKo_0493"/>
<dbReference type="PATRIC" id="fig|390236.22.peg.473"/>
<dbReference type="eggNOG" id="COG0050">
    <property type="taxonomic scope" value="Bacteria"/>
</dbReference>
<dbReference type="HOGENOM" id="CLU_007265_0_0_12"/>
<dbReference type="OrthoDB" id="9804504at2"/>
<dbReference type="Proteomes" id="UP000005216">
    <property type="component" value="Chromosome"/>
</dbReference>
<dbReference type="GO" id="GO:0005737">
    <property type="term" value="C:cytoplasm"/>
    <property type="evidence" value="ECO:0007669"/>
    <property type="project" value="UniProtKB-SubCell"/>
</dbReference>
<dbReference type="GO" id="GO:0005525">
    <property type="term" value="F:GTP binding"/>
    <property type="evidence" value="ECO:0007669"/>
    <property type="project" value="UniProtKB-UniRule"/>
</dbReference>
<dbReference type="GO" id="GO:0003924">
    <property type="term" value="F:GTPase activity"/>
    <property type="evidence" value="ECO:0007669"/>
    <property type="project" value="InterPro"/>
</dbReference>
<dbReference type="GO" id="GO:0003746">
    <property type="term" value="F:translation elongation factor activity"/>
    <property type="evidence" value="ECO:0007669"/>
    <property type="project" value="UniProtKB-UniRule"/>
</dbReference>
<dbReference type="CDD" id="cd01884">
    <property type="entry name" value="EF_Tu"/>
    <property type="match status" value="1"/>
</dbReference>
<dbReference type="CDD" id="cd03697">
    <property type="entry name" value="EFTU_II"/>
    <property type="match status" value="1"/>
</dbReference>
<dbReference type="CDD" id="cd03707">
    <property type="entry name" value="EFTU_III"/>
    <property type="match status" value="1"/>
</dbReference>
<dbReference type="FunFam" id="2.40.30.10:FF:000001">
    <property type="entry name" value="Elongation factor Tu"/>
    <property type="match status" value="1"/>
</dbReference>
<dbReference type="FunFam" id="3.40.50.300:FF:000576">
    <property type="entry name" value="Elongation factor Tu"/>
    <property type="match status" value="1"/>
</dbReference>
<dbReference type="Gene3D" id="3.40.50.300">
    <property type="entry name" value="P-loop containing nucleotide triphosphate hydrolases"/>
    <property type="match status" value="1"/>
</dbReference>
<dbReference type="Gene3D" id="2.40.30.10">
    <property type="entry name" value="Translation factors"/>
    <property type="match status" value="2"/>
</dbReference>
<dbReference type="HAMAP" id="MF_00118_B">
    <property type="entry name" value="EF_Tu_B"/>
    <property type="match status" value="1"/>
</dbReference>
<dbReference type="InterPro" id="IPR041709">
    <property type="entry name" value="EF-Tu_GTP-bd"/>
</dbReference>
<dbReference type="InterPro" id="IPR050055">
    <property type="entry name" value="EF-Tu_GTPase"/>
</dbReference>
<dbReference type="InterPro" id="IPR004161">
    <property type="entry name" value="EFTu-like_2"/>
</dbReference>
<dbReference type="InterPro" id="IPR033720">
    <property type="entry name" value="EFTU_2"/>
</dbReference>
<dbReference type="InterPro" id="IPR031157">
    <property type="entry name" value="G_TR_CS"/>
</dbReference>
<dbReference type="InterPro" id="IPR027417">
    <property type="entry name" value="P-loop_NTPase"/>
</dbReference>
<dbReference type="InterPro" id="IPR005225">
    <property type="entry name" value="Small_GTP-bd"/>
</dbReference>
<dbReference type="InterPro" id="IPR000795">
    <property type="entry name" value="T_Tr_GTP-bd_dom"/>
</dbReference>
<dbReference type="InterPro" id="IPR009000">
    <property type="entry name" value="Transl_B-barrel_sf"/>
</dbReference>
<dbReference type="InterPro" id="IPR009001">
    <property type="entry name" value="Transl_elong_EF1A/Init_IF2_C"/>
</dbReference>
<dbReference type="InterPro" id="IPR004541">
    <property type="entry name" value="Transl_elong_EFTu/EF1A_bac/org"/>
</dbReference>
<dbReference type="InterPro" id="IPR004160">
    <property type="entry name" value="Transl_elong_EFTu/EF1A_C"/>
</dbReference>
<dbReference type="NCBIfam" id="TIGR00485">
    <property type="entry name" value="EF-Tu"/>
    <property type="match status" value="1"/>
</dbReference>
<dbReference type="NCBIfam" id="NF000766">
    <property type="entry name" value="PRK00049.1"/>
    <property type="match status" value="1"/>
</dbReference>
<dbReference type="NCBIfam" id="NF009372">
    <property type="entry name" value="PRK12735.1"/>
    <property type="match status" value="1"/>
</dbReference>
<dbReference type="NCBIfam" id="NF009373">
    <property type="entry name" value="PRK12736.1"/>
    <property type="match status" value="1"/>
</dbReference>
<dbReference type="NCBIfam" id="TIGR00231">
    <property type="entry name" value="small_GTP"/>
    <property type="match status" value="1"/>
</dbReference>
<dbReference type="PANTHER" id="PTHR43721:SF22">
    <property type="entry name" value="ELONGATION FACTOR TU, MITOCHONDRIAL"/>
    <property type="match status" value="1"/>
</dbReference>
<dbReference type="PANTHER" id="PTHR43721">
    <property type="entry name" value="ELONGATION FACTOR TU-RELATED"/>
    <property type="match status" value="1"/>
</dbReference>
<dbReference type="Pfam" id="PF00009">
    <property type="entry name" value="GTP_EFTU"/>
    <property type="match status" value="1"/>
</dbReference>
<dbReference type="Pfam" id="PF03144">
    <property type="entry name" value="GTP_EFTU_D2"/>
    <property type="match status" value="1"/>
</dbReference>
<dbReference type="Pfam" id="PF03143">
    <property type="entry name" value="GTP_EFTU_D3"/>
    <property type="match status" value="1"/>
</dbReference>
<dbReference type="PRINTS" id="PR00315">
    <property type="entry name" value="ELONGATNFCT"/>
</dbReference>
<dbReference type="SUPFAM" id="SSF50465">
    <property type="entry name" value="EF-Tu/eEF-1alpha/eIF2-gamma C-terminal domain"/>
    <property type="match status" value="1"/>
</dbReference>
<dbReference type="SUPFAM" id="SSF52540">
    <property type="entry name" value="P-loop containing nucleoside triphosphate hydrolases"/>
    <property type="match status" value="1"/>
</dbReference>
<dbReference type="SUPFAM" id="SSF50447">
    <property type="entry name" value="Translation proteins"/>
    <property type="match status" value="1"/>
</dbReference>
<dbReference type="PROSITE" id="PS00301">
    <property type="entry name" value="G_TR_1"/>
    <property type="match status" value="1"/>
</dbReference>
<dbReference type="PROSITE" id="PS51722">
    <property type="entry name" value="G_TR_2"/>
    <property type="match status" value="1"/>
</dbReference>
<reference key="1">
    <citation type="journal article" date="2006" name="BMC Genomics">
        <title>Comparative genome analysis: selection pressure on the Borrelia vls cassettes is essential for infectivity.</title>
        <authorList>
            <person name="Gloeckner G."/>
            <person name="Schulte-Spechtel U."/>
            <person name="Schilhabel M."/>
            <person name="Felder M."/>
            <person name="Suehnel J."/>
            <person name="Wilske B."/>
            <person name="Platzer M."/>
        </authorList>
    </citation>
    <scope>NUCLEOTIDE SEQUENCE [LARGE SCALE GENOMIC DNA]</scope>
    <source>
        <strain>PKo</strain>
    </source>
</reference>
<reference key="2">
    <citation type="journal article" date="2011" name="J. Bacteriol.">
        <title>Whole-genome sequences of two Borrelia afzelii and two Borrelia garinii Lyme disease agent isolates.</title>
        <authorList>
            <person name="Casjens S.R."/>
            <person name="Mongodin E.F."/>
            <person name="Qiu W.G."/>
            <person name="Dunn J.J."/>
            <person name="Luft B.J."/>
            <person name="Fraser-Liggett C.M."/>
            <person name="Schutzer S.E."/>
        </authorList>
    </citation>
    <scope>NUCLEOTIDE SEQUENCE [LARGE SCALE GENOMIC DNA]</scope>
    <source>
        <strain>PKo</strain>
    </source>
</reference>
<protein>
    <recommendedName>
        <fullName evidence="2">Elongation factor Tu</fullName>
        <shortName evidence="2">EF-Tu</shortName>
        <ecNumber evidence="2">3.6.5.3</ecNumber>
    </recommendedName>
</protein>
<comment type="function">
    <text evidence="2">GTP hydrolase that promotes the GTP-dependent binding of aminoacyl-tRNA to the A-site of ribosomes during protein biosynthesis.</text>
</comment>
<comment type="catalytic activity">
    <reaction evidence="2">
        <text>GTP + H2O = GDP + phosphate + H(+)</text>
        <dbReference type="Rhea" id="RHEA:19669"/>
        <dbReference type="ChEBI" id="CHEBI:15377"/>
        <dbReference type="ChEBI" id="CHEBI:15378"/>
        <dbReference type="ChEBI" id="CHEBI:37565"/>
        <dbReference type="ChEBI" id="CHEBI:43474"/>
        <dbReference type="ChEBI" id="CHEBI:58189"/>
        <dbReference type="EC" id="3.6.5.3"/>
    </reaction>
    <physiologicalReaction direction="left-to-right" evidence="2">
        <dbReference type="Rhea" id="RHEA:19670"/>
    </physiologicalReaction>
</comment>
<comment type="subunit">
    <text evidence="2">Monomer.</text>
</comment>
<comment type="subcellular location">
    <subcellularLocation>
        <location evidence="2">Cytoplasm</location>
    </subcellularLocation>
</comment>
<comment type="similarity">
    <text evidence="2">Belongs to the TRAFAC class translation factor GTPase superfamily. Classic translation factor GTPase family. EF-Tu/EF-1A subfamily.</text>
</comment>
<proteinExistence type="inferred from homology"/>
<feature type="chain" id="PRO_1000015619" description="Elongation factor Tu">
    <location>
        <begin position="1"/>
        <end position="394"/>
    </location>
</feature>
<feature type="domain" description="tr-type G">
    <location>
        <begin position="10"/>
        <end position="205"/>
    </location>
</feature>
<feature type="region of interest" description="G1" evidence="1">
    <location>
        <begin position="19"/>
        <end position="26"/>
    </location>
</feature>
<feature type="region of interest" description="G2" evidence="1">
    <location>
        <begin position="61"/>
        <end position="65"/>
    </location>
</feature>
<feature type="region of interest" description="G3" evidence="1">
    <location>
        <begin position="82"/>
        <end position="85"/>
    </location>
</feature>
<feature type="region of interest" description="G4" evidence="1">
    <location>
        <begin position="137"/>
        <end position="140"/>
    </location>
</feature>
<feature type="region of interest" description="G5" evidence="1">
    <location>
        <begin position="173"/>
        <end position="175"/>
    </location>
</feature>
<feature type="binding site" evidence="2">
    <location>
        <begin position="19"/>
        <end position="26"/>
    </location>
    <ligand>
        <name>GTP</name>
        <dbReference type="ChEBI" id="CHEBI:37565"/>
    </ligand>
</feature>
<feature type="binding site" evidence="2">
    <location>
        <position position="26"/>
    </location>
    <ligand>
        <name>Mg(2+)</name>
        <dbReference type="ChEBI" id="CHEBI:18420"/>
    </ligand>
</feature>
<feature type="binding site" evidence="2">
    <location>
        <begin position="82"/>
        <end position="86"/>
    </location>
    <ligand>
        <name>GTP</name>
        <dbReference type="ChEBI" id="CHEBI:37565"/>
    </ligand>
</feature>
<feature type="binding site" evidence="2">
    <location>
        <begin position="137"/>
        <end position="140"/>
    </location>
    <ligand>
        <name>GTP</name>
        <dbReference type="ChEBI" id="CHEBI:37565"/>
    </ligand>
</feature>